<organism>
    <name type="scientific">Aspergillus niger (strain ATCC 1015 / CBS 113.46 / FGSC A1144 / LSHB Ac4 / NCTC 3858a / NRRL 328 / USDA 3528.7)</name>
    <dbReference type="NCBI Taxonomy" id="380704"/>
    <lineage>
        <taxon>Eukaryota</taxon>
        <taxon>Fungi</taxon>
        <taxon>Dikarya</taxon>
        <taxon>Ascomycota</taxon>
        <taxon>Pezizomycotina</taxon>
        <taxon>Eurotiomycetes</taxon>
        <taxon>Eurotiomycetidae</taxon>
        <taxon>Eurotiales</taxon>
        <taxon>Aspergillaceae</taxon>
        <taxon>Aspergillus</taxon>
        <taxon>Aspergillus subgen. Circumdati</taxon>
    </lineage>
</organism>
<proteinExistence type="evidence at protein level"/>
<name>YAND_ASPNA</name>
<gene>
    <name evidence="5" type="primary">yanD</name>
    <name type="ORF">ASPNIDRAFT_127904</name>
</gene>
<protein>
    <recommendedName>
        <fullName evidence="5">Short chain dehydrogenase yanD</fullName>
        <ecNumber evidence="7">1.1.1.-</ecNumber>
    </recommendedName>
    <alternativeName>
        <fullName evidence="5">Yanuthone D biosynthesis cluster protein D</fullName>
    </alternativeName>
</protein>
<sequence length="330" mass="36447">MVKFFQPKIDPLPTGIDLTGKTAVITGASAGMGLEVTKQLLRLRLSTAILAVRNVTKGEACIKSLLQDRGIQTHNPKPTIKVMELDMDRYDSVQQFAKTLREEVPVVDLLILNAGVASLNFERSPSGHERVTQVNYCSNVLLVAELLPHLEAGAEQTGSPARISWVGSRSHETPSFEKKAPIEADEGVLEHMDKEEAFVPFQRYNDTKLLCVLFLYSLAPRLDPKKVVINTMCPGMVNTGMSNMLPLHLRLIFNVIKAIRARPVEVGGWIILNAALVAGPESHGKFLADKTITDKSAIVTSPMGQDIQKKLWEETITEMSKLTTLPPQFR</sequence>
<reference key="1">
    <citation type="journal article" date="2011" name="Genome Res.">
        <title>Comparative genomics of citric-acid-producing Aspergillus niger ATCC 1015 versus enzyme-producing CBS 513.88.</title>
        <authorList>
            <person name="Andersen M.R."/>
            <person name="Salazar M.P."/>
            <person name="Schaap P.J."/>
            <person name="van de Vondervoort P.J.I."/>
            <person name="Culley D."/>
            <person name="Thykaer J."/>
            <person name="Frisvad J.C."/>
            <person name="Nielsen K.F."/>
            <person name="Albang R."/>
            <person name="Albermann K."/>
            <person name="Berka R.M."/>
            <person name="Braus G.H."/>
            <person name="Braus-Stromeyer S.A."/>
            <person name="Corrochano L.M."/>
            <person name="Dai Z."/>
            <person name="van Dijck P.W.M."/>
            <person name="Hofmann G."/>
            <person name="Lasure L.L."/>
            <person name="Magnuson J.K."/>
            <person name="Menke H."/>
            <person name="Meijer M."/>
            <person name="Meijer S.L."/>
            <person name="Nielsen J.B."/>
            <person name="Nielsen M.L."/>
            <person name="van Ooyen A.J.J."/>
            <person name="Pel H.J."/>
            <person name="Poulsen L."/>
            <person name="Samson R.A."/>
            <person name="Stam H."/>
            <person name="Tsang A."/>
            <person name="van den Brink J.M."/>
            <person name="Atkins A."/>
            <person name="Aerts A."/>
            <person name="Shapiro H."/>
            <person name="Pangilinan J."/>
            <person name="Salamov A."/>
            <person name="Lou Y."/>
            <person name="Lindquist E."/>
            <person name="Lucas S."/>
            <person name="Grimwood J."/>
            <person name="Grigoriev I.V."/>
            <person name="Kubicek C.P."/>
            <person name="Martinez D."/>
            <person name="van Peij N.N.M.E."/>
            <person name="Roubos J.A."/>
            <person name="Nielsen J."/>
            <person name="Baker S.E."/>
        </authorList>
    </citation>
    <scope>NUCLEOTIDE SEQUENCE [LARGE SCALE GENOMIC DNA]</scope>
    <source>
        <strain>ATCC 1015 / CBS 113.46 / FGSC A1144 / LSHB Ac4 / NCTC 3858a / NRRL 328 / USDA 3528.7</strain>
    </source>
</reference>
<reference key="2">
    <citation type="journal article" date="2000" name="J. Org. Chem.">
        <title>Yanuthones: novel metabolites from a marine isolate of Aspergillus niger.</title>
        <authorList>
            <person name="Bugni T.S."/>
            <person name="Abbanat D."/>
            <person name="Bernan V.S."/>
            <person name="Maiese W.M."/>
            <person name="Greenstein M."/>
            <person name="Van Wagoner R.M."/>
            <person name="Ireland C.M."/>
        </authorList>
    </citation>
    <scope>BIOTECHNOLOGY</scope>
</reference>
<reference key="3">
    <citation type="journal article" date="2014" name="Chem. Biol.">
        <title>Molecular and chemical characterization of the biosynthesis of the 6-MSA-derived meroterpenoid yanuthone D in Aspergillus niger.</title>
        <authorList>
            <person name="Holm D.K."/>
            <person name="Petersen L.M."/>
            <person name="Klitgaard A."/>
            <person name="Knudsen P.B."/>
            <person name="Jarczynska Z.D."/>
            <person name="Nielsen K.F."/>
            <person name="Gotfredsen C.H."/>
            <person name="Larsen T.O."/>
            <person name="Mortensen U.H."/>
        </authorList>
    </citation>
    <scope>FUNCTION</scope>
    <scope>DISRUPTION PHENOTYPE</scope>
</reference>
<evidence type="ECO:0000250" key="1">
    <source>
        <dbReference type="UniProtKB" id="L0E2Z4"/>
    </source>
</evidence>
<evidence type="ECO:0000250" key="2">
    <source>
        <dbReference type="UniProtKB" id="O93868"/>
    </source>
</evidence>
<evidence type="ECO:0000269" key="3">
    <source>
    </source>
</evidence>
<evidence type="ECO:0000269" key="4">
    <source>
    </source>
</evidence>
<evidence type="ECO:0000303" key="5">
    <source>
    </source>
</evidence>
<evidence type="ECO:0000305" key="6"/>
<evidence type="ECO:0000305" key="7">
    <source>
    </source>
</evidence>
<keyword id="KW-0521">NADP</keyword>
<keyword id="KW-0560">Oxidoreductase</keyword>
<comment type="function">
    <text evidence="4">Short chain dehydrogenase; part of the gene cluster that mediates the biosynthesis of yanuthone D, a fungal isoprenoid epoxycyclohexenone that acts as an antibiotic against fungi and bacteria (PubMed:24684908). The first step of the pathway is the synthesis of 6-methylsalicylic acid (6-MSA) by the polyketide synthase yanA (PubMed:24684908). 6-MSA is then converted to m-cresol by the decarboxylase yanB (PubMed:24684908). The cytochrome P450 monooxygenase yanC then catalyzes the oxidation of m-cresol to toluquinol (PubMed:24684908). Epoxidation of toluquinol is then performed by the short chain dehydrogenase yanD, with the help of yanE, and a further prenylation by yanG leads to 7-deacetoxyyanuthone A (PubMed:24684908). The next step is the hydroxylation of C-22 of 7-deacetoxyyanuthone A by the cytochrome P450 monooxygenase yanH to yield 22-deacetylyanuthone A (PubMed:24684908). O-Mevalon transferase yanI then attaches mevalon to the hydroxyl group of 22-deacetylyanuthone A to produce yanuthone E (PubMed:24684908). Finally, the FAD-dependent monooxygenase yanF oxidizes the hydroxyl group at C15 of yanuthone E to form yanuthone D (PubMed:24684908). Furthermore, several branching points in the pathway lead to the production of yanuthones F and G from 7-deacetoxyyanuthone A; yanuthones H and I from 22-deacetylyanuthone A; and yanuthone J from yanuthone E (PubMed:24684908). YanD is also involved in the synthesis of yanuthone X1 which does not have 6-methylsalicylic acid (6-MSA) as precursor (PubMed:24684908).</text>
</comment>
<comment type="pathway">
    <text evidence="4">Secondary metabolite biosynthesis; terpenoid biosynthesis.</text>
</comment>
<comment type="disruption phenotype">
    <text evidence="4">Loses the ability to produce yanuthone D (PubMed:24684908). Also leads to the loss of production of yanuthone X1 which does not have 6-methylsalicylic acid (6-MSA) as a precursor (PubMed:24684908).</text>
</comment>
<comment type="biotechnology">
    <text evidence="3">Yanuthone D is an antibiotic against C.albicans, methicillin-resistant S.aureus (MRSA), and vancomycin-resistant Enterococcus (PubMed:11031048).</text>
</comment>
<comment type="similarity">
    <text evidence="6">Belongs to the short-chain dehydrogenases/reductases (SDR) family.</text>
</comment>
<comment type="sequence caution" evidence="6">
    <conflict type="erroneous gene model prediction">
        <sequence resource="EMBL-CDS" id="EHA22199"/>
    </conflict>
</comment>
<accession>G3Y422</accession>
<dbReference type="EC" id="1.1.1.-" evidence="7"/>
<dbReference type="EMBL" id="ACJE01000012">
    <property type="protein sequence ID" value="EHA22199.1"/>
    <property type="status" value="ALT_SEQ"/>
    <property type="molecule type" value="Genomic_DNA"/>
</dbReference>
<dbReference type="SMR" id="G3Y422"/>
<dbReference type="STRING" id="380704.G3Y422"/>
<dbReference type="HOGENOM" id="CLU_1781852_0_0_1"/>
<dbReference type="OrthoDB" id="55073at5052"/>
<dbReference type="UniPathway" id="UPA00213"/>
<dbReference type="Proteomes" id="UP000009038">
    <property type="component" value="Unassembled WGS sequence"/>
</dbReference>
<dbReference type="GO" id="GO:0016491">
    <property type="term" value="F:oxidoreductase activity"/>
    <property type="evidence" value="ECO:0007669"/>
    <property type="project" value="UniProtKB-KW"/>
</dbReference>
<dbReference type="GO" id="GO:0016114">
    <property type="term" value="P:terpenoid biosynthetic process"/>
    <property type="evidence" value="ECO:0007669"/>
    <property type="project" value="UniProtKB-UniPathway"/>
</dbReference>
<dbReference type="Gene3D" id="3.40.50.720">
    <property type="entry name" value="NAD(P)-binding Rossmann-like Domain"/>
    <property type="match status" value="1"/>
</dbReference>
<dbReference type="InterPro" id="IPR036291">
    <property type="entry name" value="NAD(P)-bd_dom_sf"/>
</dbReference>
<dbReference type="InterPro" id="IPR002347">
    <property type="entry name" value="SDR_fam"/>
</dbReference>
<dbReference type="PANTHER" id="PTHR24320:SF252">
    <property type="entry name" value="DEHYDROGENASE_REDUCTASE FAMILY PROTEIN, PUTATIVE (AFU_ORTHOLOGUE AFUA_3G08550)-RELATED"/>
    <property type="match status" value="1"/>
</dbReference>
<dbReference type="PANTHER" id="PTHR24320">
    <property type="entry name" value="RETINOL DEHYDROGENASE"/>
    <property type="match status" value="1"/>
</dbReference>
<dbReference type="Pfam" id="PF00106">
    <property type="entry name" value="adh_short"/>
    <property type="match status" value="1"/>
</dbReference>
<dbReference type="PRINTS" id="PR00081">
    <property type="entry name" value="GDHRDH"/>
</dbReference>
<dbReference type="SUPFAM" id="SSF51735">
    <property type="entry name" value="NAD(P)-binding Rossmann-fold domains"/>
    <property type="match status" value="1"/>
</dbReference>
<feature type="chain" id="PRO_0000436763" description="Short chain dehydrogenase yanD">
    <location>
        <begin position="1"/>
        <end position="330"/>
    </location>
</feature>
<feature type="active site" description="Proton donor" evidence="2">
    <location>
        <position position="204"/>
    </location>
</feature>
<feature type="active site" description="Lowers pKa of active site Tyr" evidence="2">
    <location>
        <position position="208"/>
    </location>
</feature>
<feature type="binding site" evidence="1">
    <location>
        <position position="57"/>
    </location>
    <ligand>
        <name>NADP(+)</name>
        <dbReference type="ChEBI" id="CHEBI:58349"/>
    </ligand>
</feature>
<feature type="binding site" evidence="1">
    <location>
        <position position="86"/>
    </location>
    <ligand>
        <name>NADP(+)</name>
        <dbReference type="ChEBI" id="CHEBI:58349"/>
    </ligand>
</feature>
<feature type="binding site" evidence="2">
    <location>
        <position position="113"/>
    </location>
    <ligand>
        <name>NADP(+)</name>
        <dbReference type="ChEBI" id="CHEBI:58349"/>
    </ligand>
</feature>
<feature type="binding site" evidence="2">
    <location>
        <position position="204"/>
    </location>
    <ligand>
        <name>NADP(+)</name>
        <dbReference type="ChEBI" id="CHEBI:58349"/>
    </ligand>
</feature>
<feature type="binding site" evidence="2">
    <location>
        <position position="208"/>
    </location>
    <ligand>
        <name>NADP(+)</name>
        <dbReference type="ChEBI" id="CHEBI:58349"/>
    </ligand>
</feature>